<protein>
    <recommendedName>
        <fullName evidence="1">Guanosine-5'-triphosphate,3'-diphosphate pyrophosphatase</fullName>
        <ecNumber evidence="1">3.6.1.40</ecNumber>
    </recommendedName>
    <alternativeName>
        <fullName evidence="1">Guanosine pentaphosphate phosphohydrolase</fullName>
    </alternativeName>
    <alternativeName>
        <fullName evidence="1">pppGpp-5'-phosphohydrolase</fullName>
    </alternativeName>
</protein>
<evidence type="ECO:0000255" key="1">
    <source>
        <dbReference type="HAMAP-Rule" id="MF_01550"/>
    </source>
</evidence>
<sequence>MMLSSTSLYAAIDLGSNSFHMLVVREVAGSIQTLARIKRKVRLAAGLDNQNHLSQEAMERGWQCLKLFSERLQDIPLDQIRVVATATLRLASNADEFLRTATEILGCPIQVISGEEEARLIYHGVAHTTGGPEQRLVVDIGGGSTELVTGNGAQANILVSLSMGCVTWLERYFGDRHLAKENFERAELAAHEMIKPVAQRFREHGWQVCVGASGTVQALQEIMVAQGMDELITLAKLQQLKQRAIQCGKLEELEIPGLTLERALVFPSGLSILIAIFQELSIESMTLAGGALREGLVYGMLHLPVEQDIRRRTLRNLQRRYLLDTEQAKRVSCLADNFFLQVEKEWHLDGRCREFLQNACLIHEIGLSVDFKHAPQHAAYLIRNLDLPGFTPAQKLLLSALLQNQSDTIDLSLLNQQNALPADMAQHLCRLLRLAIIFSSRRRDDTLPAVRLRADNNALYVLVPQGWLEQHPYRAEALEQESHWQSYVQWPLLLEELS</sequence>
<proteinExistence type="inferred from homology"/>
<name>GPPA_YERPP</name>
<feature type="chain" id="PRO_0000314503" description="Guanosine-5'-triphosphate,3'-diphosphate pyrophosphatase">
    <location>
        <begin position="1"/>
        <end position="498"/>
    </location>
</feature>
<dbReference type="EC" id="3.6.1.40" evidence="1"/>
<dbReference type="EMBL" id="CP000668">
    <property type="protein sequence ID" value="ABP41841.1"/>
    <property type="molecule type" value="Genomic_DNA"/>
</dbReference>
<dbReference type="SMR" id="A4TRC9"/>
<dbReference type="KEGG" id="ypp:YPDSF_3488"/>
<dbReference type="UniPathway" id="UPA00908">
    <property type="reaction ID" value="UER00885"/>
</dbReference>
<dbReference type="GO" id="GO:0004309">
    <property type="term" value="F:exopolyphosphatase activity"/>
    <property type="evidence" value="ECO:0007669"/>
    <property type="project" value="InterPro"/>
</dbReference>
<dbReference type="GO" id="GO:0008894">
    <property type="term" value="F:guanosine-5'-triphosphate,3'-diphosphate diphosphatase activity"/>
    <property type="evidence" value="ECO:0007669"/>
    <property type="project" value="UniProtKB-UniRule"/>
</dbReference>
<dbReference type="GO" id="GO:0015974">
    <property type="term" value="P:guanosine pentaphosphate catabolic process"/>
    <property type="evidence" value="ECO:0007669"/>
    <property type="project" value="InterPro"/>
</dbReference>
<dbReference type="GO" id="GO:0015970">
    <property type="term" value="P:guanosine tetraphosphate biosynthetic process"/>
    <property type="evidence" value="ECO:0007669"/>
    <property type="project" value="UniProtKB-UniRule"/>
</dbReference>
<dbReference type="GO" id="GO:0015949">
    <property type="term" value="P:nucleobase-containing small molecule interconversion"/>
    <property type="evidence" value="ECO:0007669"/>
    <property type="project" value="TreeGrafter"/>
</dbReference>
<dbReference type="CDD" id="cd24117">
    <property type="entry name" value="ASKHA_NBD_EcGppA-like"/>
    <property type="match status" value="1"/>
</dbReference>
<dbReference type="FunFam" id="1.10.3210.10:FF:000004">
    <property type="entry name" value="Guanosine-5'-triphosphate,3'-diphosphate pyrophosphatase"/>
    <property type="match status" value="1"/>
</dbReference>
<dbReference type="FunFam" id="3.30.420.150:FF:000001">
    <property type="entry name" value="Guanosine-5'-triphosphate,3'-diphosphate pyrophosphatase"/>
    <property type="match status" value="1"/>
</dbReference>
<dbReference type="FunFam" id="3.30.420.40:FF:000023">
    <property type="entry name" value="Guanosine-5'-triphosphate,3'-diphosphate pyrophosphatase"/>
    <property type="match status" value="1"/>
</dbReference>
<dbReference type="Gene3D" id="3.30.420.40">
    <property type="match status" value="1"/>
</dbReference>
<dbReference type="Gene3D" id="3.30.420.150">
    <property type="entry name" value="Exopolyphosphatase. Domain 2"/>
    <property type="match status" value="1"/>
</dbReference>
<dbReference type="Gene3D" id="1.10.3210.10">
    <property type="entry name" value="Hypothetical protein af1432"/>
    <property type="match status" value="1"/>
</dbReference>
<dbReference type="HAMAP" id="MF_01550">
    <property type="entry name" value="GppA"/>
    <property type="match status" value="1"/>
</dbReference>
<dbReference type="InterPro" id="IPR043129">
    <property type="entry name" value="ATPase_NBD"/>
</dbReference>
<dbReference type="InterPro" id="IPR022371">
    <property type="entry name" value="Exopolyphosphatase"/>
</dbReference>
<dbReference type="InterPro" id="IPR050273">
    <property type="entry name" value="GppA/Ppx_hydrolase"/>
</dbReference>
<dbReference type="InterPro" id="IPR023709">
    <property type="entry name" value="Guo-5TP_3DP_PyrP"/>
</dbReference>
<dbReference type="InterPro" id="IPR048950">
    <property type="entry name" value="Ppx_GppA_C"/>
</dbReference>
<dbReference type="InterPro" id="IPR003695">
    <property type="entry name" value="Ppx_GppA_N"/>
</dbReference>
<dbReference type="InterPro" id="IPR030673">
    <property type="entry name" value="PyroPPase_GppA_Ppx"/>
</dbReference>
<dbReference type="NCBIfam" id="TIGR03706">
    <property type="entry name" value="exo_poly_only"/>
    <property type="match status" value="1"/>
</dbReference>
<dbReference type="NCBIfam" id="NF008260">
    <property type="entry name" value="PRK11031.1"/>
    <property type="match status" value="1"/>
</dbReference>
<dbReference type="PANTHER" id="PTHR30005">
    <property type="entry name" value="EXOPOLYPHOSPHATASE"/>
    <property type="match status" value="1"/>
</dbReference>
<dbReference type="PANTHER" id="PTHR30005:SF0">
    <property type="entry name" value="RETROGRADE REGULATION PROTEIN 2"/>
    <property type="match status" value="1"/>
</dbReference>
<dbReference type="Pfam" id="PF02541">
    <property type="entry name" value="Ppx-GppA"/>
    <property type="match status" value="1"/>
</dbReference>
<dbReference type="Pfam" id="PF21447">
    <property type="entry name" value="Ppx-GppA_III"/>
    <property type="match status" value="1"/>
</dbReference>
<dbReference type="PIRSF" id="PIRSF001267">
    <property type="entry name" value="Pyrophosphatase_GppA_Ppx"/>
    <property type="match status" value="1"/>
</dbReference>
<dbReference type="SUPFAM" id="SSF53067">
    <property type="entry name" value="Actin-like ATPase domain"/>
    <property type="match status" value="2"/>
</dbReference>
<dbReference type="SUPFAM" id="SSF109604">
    <property type="entry name" value="HD-domain/PDEase-like"/>
    <property type="match status" value="1"/>
</dbReference>
<reference key="1">
    <citation type="submission" date="2007-02" db="EMBL/GenBank/DDBJ databases">
        <title>Complete sequence of chromosome of Yersinia pestis Pestoides F.</title>
        <authorList>
            <consortium name="US DOE Joint Genome Institute"/>
            <person name="Copeland A."/>
            <person name="Lucas S."/>
            <person name="Lapidus A."/>
            <person name="Barry K."/>
            <person name="Detter J.C."/>
            <person name="Glavina del Rio T."/>
            <person name="Hammon N."/>
            <person name="Israni S."/>
            <person name="Dalin E."/>
            <person name="Tice H."/>
            <person name="Pitluck S."/>
            <person name="Di Bartolo G."/>
            <person name="Chain P."/>
            <person name="Malfatti S."/>
            <person name="Shin M."/>
            <person name="Vergez L."/>
            <person name="Schmutz J."/>
            <person name="Larimer F."/>
            <person name="Land M."/>
            <person name="Hauser L."/>
            <person name="Worsham P."/>
            <person name="Chu M."/>
            <person name="Bearden S."/>
            <person name="Garcia E."/>
            <person name="Richardson P."/>
        </authorList>
    </citation>
    <scope>NUCLEOTIDE SEQUENCE [LARGE SCALE GENOMIC DNA]</scope>
    <source>
        <strain>Pestoides F</strain>
    </source>
</reference>
<organism>
    <name type="scientific">Yersinia pestis (strain Pestoides F)</name>
    <dbReference type="NCBI Taxonomy" id="386656"/>
    <lineage>
        <taxon>Bacteria</taxon>
        <taxon>Pseudomonadati</taxon>
        <taxon>Pseudomonadota</taxon>
        <taxon>Gammaproteobacteria</taxon>
        <taxon>Enterobacterales</taxon>
        <taxon>Yersiniaceae</taxon>
        <taxon>Yersinia</taxon>
    </lineage>
</organism>
<comment type="function">
    <text evidence="1">Catalyzes the conversion of pppGpp to ppGpp. Guanosine pentaphosphate (pppGpp) is a cytoplasmic signaling molecule which together with ppGpp controls the 'stringent response', an adaptive process that allows bacteria to respond to amino acid starvation, resulting in the coordinated regulation of numerous cellular activities.</text>
</comment>
<comment type="catalytic activity">
    <reaction evidence="1">
        <text>guanosine 3'-diphosphate 5'-triphosphate + H2O = guanosine 3',5'-bis(diphosphate) + phosphate + H(+)</text>
        <dbReference type="Rhea" id="RHEA:13073"/>
        <dbReference type="ChEBI" id="CHEBI:15377"/>
        <dbReference type="ChEBI" id="CHEBI:15378"/>
        <dbReference type="ChEBI" id="CHEBI:43474"/>
        <dbReference type="ChEBI" id="CHEBI:77828"/>
        <dbReference type="ChEBI" id="CHEBI:142410"/>
        <dbReference type="EC" id="3.6.1.40"/>
    </reaction>
</comment>
<comment type="pathway">
    <text evidence="1">Purine metabolism; ppGpp biosynthesis; ppGpp from GTP: step 2/2.</text>
</comment>
<comment type="similarity">
    <text evidence="1">Belongs to the GppA/Ppx family. GppA subfamily.</text>
</comment>
<gene>
    <name evidence="1" type="primary">gppA</name>
    <name type="ordered locus">YPDSF_3488</name>
</gene>
<accession>A4TRC9</accession>
<keyword id="KW-0378">Hydrolase</keyword>